<protein>
    <recommendedName>
        <fullName evidence="1">Ion-translocating oxidoreductase complex subunit E</fullName>
        <ecNumber evidence="1">7.-.-.-</ecNumber>
    </recommendedName>
    <alternativeName>
        <fullName evidence="1">Rsx electron transport complex subunit E</fullName>
    </alternativeName>
</protein>
<feature type="chain" id="PRO_1000014112" description="Ion-translocating oxidoreductase complex subunit E">
    <location>
        <begin position="1"/>
        <end position="231"/>
    </location>
</feature>
<feature type="transmembrane region" description="Helical" evidence="1">
    <location>
        <begin position="18"/>
        <end position="38"/>
    </location>
</feature>
<feature type="transmembrane region" description="Helical" evidence="1">
    <location>
        <begin position="39"/>
        <end position="59"/>
    </location>
</feature>
<feature type="transmembrane region" description="Helical" evidence="1">
    <location>
        <begin position="63"/>
        <end position="83"/>
    </location>
</feature>
<feature type="transmembrane region" description="Helical" evidence="1">
    <location>
        <begin position="86"/>
        <end position="106"/>
    </location>
</feature>
<feature type="transmembrane region" description="Helical" evidence="1">
    <location>
        <begin position="125"/>
        <end position="145"/>
    </location>
</feature>
<feature type="transmembrane region" description="Helical" evidence="1">
    <location>
        <begin position="182"/>
        <end position="202"/>
    </location>
</feature>
<organism>
    <name type="scientific">Shigella sonnei (strain Ss046)</name>
    <dbReference type="NCBI Taxonomy" id="300269"/>
    <lineage>
        <taxon>Bacteria</taxon>
        <taxon>Pseudomonadati</taxon>
        <taxon>Pseudomonadota</taxon>
        <taxon>Gammaproteobacteria</taxon>
        <taxon>Enterobacterales</taxon>
        <taxon>Enterobacteriaceae</taxon>
        <taxon>Shigella</taxon>
    </lineage>
</organism>
<sequence>MSEIKDVIVQGLWKNNSALVQLLGLCPLLAVTSTATNALGLGLATTLVLTLTNLTISTLRHWTPAEIRIPIYVMIIASVVSAVQMLINAYAFGLYQSLGIFIPLIVTNCIVVGRAEAFAAKKGPALSALDGFSIGMGATCAMFVLGSLREIIGNGTLFDGADALLGSWAKVLRVEIFHTDSPFLLAMLPPGAFIGLGLMLAGKYLIDERMKKRRTEAAAERALPNGETGNV</sequence>
<gene>
    <name evidence="1" type="primary">rsxE</name>
    <name type="ordered locus">SSON_1526</name>
</gene>
<dbReference type="EC" id="7.-.-.-" evidence="1"/>
<dbReference type="EMBL" id="CP000038">
    <property type="protein sequence ID" value="AAZ88225.1"/>
    <property type="molecule type" value="Genomic_DNA"/>
</dbReference>
<dbReference type="RefSeq" id="WP_001289657.1">
    <property type="nucleotide sequence ID" value="NC_007384.1"/>
</dbReference>
<dbReference type="SMR" id="Q3Z1Y7"/>
<dbReference type="GeneID" id="93775784"/>
<dbReference type="KEGG" id="ssn:SSON_1526"/>
<dbReference type="HOGENOM" id="CLU_046659_1_0_6"/>
<dbReference type="Proteomes" id="UP000002529">
    <property type="component" value="Chromosome"/>
</dbReference>
<dbReference type="GO" id="GO:0005886">
    <property type="term" value="C:plasma membrane"/>
    <property type="evidence" value="ECO:0007669"/>
    <property type="project" value="UniProtKB-SubCell"/>
</dbReference>
<dbReference type="GO" id="GO:0022900">
    <property type="term" value="P:electron transport chain"/>
    <property type="evidence" value="ECO:0007669"/>
    <property type="project" value="UniProtKB-UniRule"/>
</dbReference>
<dbReference type="HAMAP" id="MF_00478">
    <property type="entry name" value="RsxE_RnfE"/>
    <property type="match status" value="1"/>
</dbReference>
<dbReference type="InterPro" id="IPR003667">
    <property type="entry name" value="NqrDE/RnfAE"/>
</dbReference>
<dbReference type="InterPro" id="IPR010968">
    <property type="entry name" value="RnfE"/>
</dbReference>
<dbReference type="NCBIfam" id="NF009070">
    <property type="entry name" value="PRK12405.1"/>
    <property type="match status" value="1"/>
</dbReference>
<dbReference type="NCBIfam" id="TIGR01948">
    <property type="entry name" value="rnfE"/>
    <property type="match status" value="1"/>
</dbReference>
<dbReference type="PANTHER" id="PTHR30586">
    <property type="entry name" value="ELECTRON TRANSPORT COMPLEX PROTEIN RNFE"/>
    <property type="match status" value="1"/>
</dbReference>
<dbReference type="PANTHER" id="PTHR30586:SF0">
    <property type="entry name" value="ION-TRANSLOCATING OXIDOREDUCTASE COMPLEX SUBUNIT E"/>
    <property type="match status" value="1"/>
</dbReference>
<dbReference type="Pfam" id="PF02508">
    <property type="entry name" value="Rnf-Nqr"/>
    <property type="match status" value="1"/>
</dbReference>
<dbReference type="PIRSF" id="PIRSF006102">
    <property type="entry name" value="NQR_DE"/>
    <property type="match status" value="1"/>
</dbReference>
<proteinExistence type="inferred from homology"/>
<comment type="function">
    <text evidence="1">Part of a membrane-bound complex that couples electron transfer with translocation of ions across the membrane. Required to maintain the reduced state of SoxR.</text>
</comment>
<comment type="subunit">
    <text evidence="1">The complex is composed of six subunits: RsxA, RsxB, RsxC, RsxD, RsxE and RsxG.</text>
</comment>
<comment type="subcellular location">
    <subcellularLocation>
        <location evidence="1">Cell inner membrane</location>
        <topology evidence="1">Multi-pass membrane protein</topology>
    </subcellularLocation>
</comment>
<comment type="similarity">
    <text evidence="1">Belongs to the NqrDE/RnfAE family.</text>
</comment>
<evidence type="ECO:0000255" key="1">
    <source>
        <dbReference type="HAMAP-Rule" id="MF_00478"/>
    </source>
</evidence>
<name>RSXE_SHISS</name>
<keyword id="KW-0997">Cell inner membrane</keyword>
<keyword id="KW-1003">Cell membrane</keyword>
<keyword id="KW-0249">Electron transport</keyword>
<keyword id="KW-0472">Membrane</keyword>
<keyword id="KW-1185">Reference proteome</keyword>
<keyword id="KW-1278">Translocase</keyword>
<keyword id="KW-0812">Transmembrane</keyword>
<keyword id="KW-1133">Transmembrane helix</keyword>
<keyword id="KW-0813">Transport</keyword>
<accession>Q3Z1Y7</accession>
<reference key="1">
    <citation type="journal article" date="2005" name="Nucleic Acids Res.">
        <title>Genome dynamics and diversity of Shigella species, the etiologic agents of bacillary dysentery.</title>
        <authorList>
            <person name="Yang F."/>
            <person name="Yang J."/>
            <person name="Zhang X."/>
            <person name="Chen L."/>
            <person name="Jiang Y."/>
            <person name="Yan Y."/>
            <person name="Tang X."/>
            <person name="Wang J."/>
            <person name="Xiong Z."/>
            <person name="Dong J."/>
            <person name="Xue Y."/>
            <person name="Zhu Y."/>
            <person name="Xu X."/>
            <person name="Sun L."/>
            <person name="Chen S."/>
            <person name="Nie H."/>
            <person name="Peng J."/>
            <person name="Xu J."/>
            <person name="Wang Y."/>
            <person name="Yuan Z."/>
            <person name="Wen Y."/>
            <person name="Yao Z."/>
            <person name="Shen Y."/>
            <person name="Qiang B."/>
            <person name="Hou Y."/>
            <person name="Yu J."/>
            <person name="Jin Q."/>
        </authorList>
    </citation>
    <scope>NUCLEOTIDE SEQUENCE [LARGE SCALE GENOMIC DNA]</scope>
    <source>
        <strain>Ss046</strain>
    </source>
</reference>